<proteinExistence type="evidence at protein level"/>
<accession>Q29147</accession>
<organism>
    <name type="scientific">Trichosurus vulpecula</name>
    <name type="common">Brush-tailed possum</name>
    <dbReference type="NCBI Taxonomy" id="9337"/>
    <lineage>
        <taxon>Eukaryota</taxon>
        <taxon>Metazoa</taxon>
        <taxon>Chordata</taxon>
        <taxon>Craniata</taxon>
        <taxon>Vertebrata</taxon>
        <taxon>Euteleostomi</taxon>
        <taxon>Mammalia</taxon>
        <taxon>Metatheria</taxon>
        <taxon>Diprotodontia</taxon>
        <taxon>Phalangeridae</taxon>
        <taxon>Trichosurus</taxon>
    </lineage>
</organism>
<dbReference type="EMBL" id="U40376">
    <property type="protein sequence ID" value="AAA84739.1"/>
    <property type="molecule type" value="mRNA"/>
</dbReference>
<dbReference type="PDB" id="2R73">
    <property type="method" value="X-ray"/>
    <property type="resolution" value="2.50 A"/>
    <property type="chains" value="A/B/C/D=16-180"/>
</dbReference>
<dbReference type="PDB" id="2R74">
    <property type="method" value="X-ray"/>
    <property type="resolution" value="1.90 A"/>
    <property type="chains" value="A/B=16-180"/>
</dbReference>
<dbReference type="PDB" id="2RA6">
    <property type="method" value="X-ray"/>
    <property type="resolution" value="1.50 A"/>
    <property type="chains" value="A/B/C/D=16-180"/>
</dbReference>
<dbReference type="PDBsum" id="2R73"/>
<dbReference type="PDBsum" id="2R74"/>
<dbReference type="PDBsum" id="2RA6"/>
<dbReference type="SMR" id="Q29147"/>
<dbReference type="EvolutionaryTrace" id="Q29147"/>
<dbReference type="GO" id="GO:0005615">
    <property type="term" value="C:extracellular space"/>
    <property type="evidence" value="ECO:0007669"/>
    <property type="project" value="TreeGrafter"/>
</dbReference>
<dbReference type="GO" id="GO:0036094">
    <property type="term" value="F:small molecule binding"/>
    <property type="evidence" value="ECO:0007669"/>
    <property type="project" value="InterPro"/>
</dbReference>
<dbReference type="CDD" id="cd19430">
    <property type="entry name" value="lipocalin_trichosorin-like"/>
    <property type="match status" value="1"/>
</dbReference>
<dbReference type="Gene3D" id="2.40.128.20">
    <property type="match status" value="1"/>
</dbReference>
<dbReference type="InterPro" id="IPR012674">
    <property type="entry name" value="Calycin"/>
</dbReference>
<dbReference type="InterPro" id="IPR002345">
    <property type="entry name" value="Lipocalin"/>
</dbReference>
<dbReference type="InterPro" id="IPR000566">
    <property type="entry name" value="Lipocln_cytosolic_FA-bd_dom"/>
</dbReference>
<dbReference type="InterPro" id="IPR002971">
    <property type="entry name" value="Maj_urinary"/>
</dbReference>
<dbReference type="PANTHER" id="PTHR11430">
    <property type="entry name" value="LIPOCALIN"/>
    <property type="match status" value="1"/>
</dbReference>
<dbReference type="PANTHER" id="PTHR11430:SF76">
    <property type="entry name" value="MAJOR URINARY PROTEIN 1-RELATED"/>
    <property type="match status" value="1"/>
</dbReference>
<dbReference type="Pfam" id="PF00061">
    <property type="entry name" value="Lipocalin"/>
    <property type="match status" value="1"/>
</dbReference>
<dbReference type="PRINTS" id="PR01221">
    <property type="entry name" value="MAJORURINARY"/>
</dbReference>
<dbReference type="SUPFAM" id="SSF50814">
    <property type="entry name" value="Lipocalins"/>
    <property type="match status" value="1"/>
</dbReference>
<feature type="signal peptide" evidence="1">
    <location>
        <begin position="1"/>
        <end position="15"/>
    </location>
</feature>
<feature type="chain" id="PRO_0000017989" description="Trichosurin">
    <location>
        <begin position="16"/>
        <end position="180"/>
    </location>
</feature>
<feature type="glycosylation site" description="N-linked (GlcNAc...) asparagine" evidence="1">
    <location>
        <position position="67"/>
    </location>
</feature>
<feature type="glycosylation site" description="N-linked (GlcNAc...) asparagine" evidence="1">
    <location>
        <position position="148"/>
    </location>
</feature>
<feature type="disulfide bond" evidence="2">
    <location>
        <begin position="87"/>
        <end position="180"/>
    </location>
</feature>
<feature type="strand" evidence="4">
    <location>
        <begin position="37"/>
        <end position="41"/>
    </location>
</feature>
<feature type="strand" evidence="5">
    <location>
        <begin position="43"/>
        <end position="51"/>
    </location>
</feature>
<feature type="helix" evidence="5">
    <location>
        <begin position="52"/>
        <end position="54"/>
    </location>
</feature>
<feature type="strand" evidence="5">
    <location>
        <begin position="64"/>
        <end position="71"/>
    </location>
</feature>
<feature type="strand" evidence="5">
    <location>
        <begin position="74"/>
        <end position="83"/>
    </location>
</feature>
<feature type="strand" evidence="5">
    <location>
        <begin position="86"/>
        <end position="96"/>
    </location>
</feature>
<feature type="strand" evidence="5">
    <location>
        <begin position="102"/>
        <end position="116"/>
    </location>
</feature>
<feature type="turn" evidence="5">
    <location>
        <begin position="120"/>
        <end position="122"/>
    </location>
</feature>
<feature type="strand" evidence="5">
    <location>
        <begin position="123"/>
        <end position="132"/>
    </location>
</feature>
<feature type="strand" evidence="5">
    <location>
        <begin position="135"/>
        <end position="147"/>
    </location>
</feature>
<feature type="helix" evidence="5">
    <location>
        <begin position="151"/>
        <end position="162"/>
    </location>
</feature>
<feature type="turn" evidence="5">
    <location>
        <begin position="163"/>
        <end position="165"/>
    </location>
</feature>
<feature type="helix" evidence="5">
    <location>
        <begin position="168"/>
        <end position="170"/>
    </location>
</feature>
<feature type="strand" evidence="5">
    <location>
        <begin position="171"/>
        <end position="173"/>
    </location>
</feature>
<feature type="helix" evidence="5">
    <location>
        <begin position="174"/>
        <end position="176"/>
    </location>
</feature>
<keyword id="KW-0002">3D-structure</keyword>
<keyword id="KW-1015">Disulfide bond</keyword>
<keyword id="KW-0325">Glycoprotein</keyword>
<keyword id="KW-0494">Milk protein</keyword>
<keyword id="KW-0964">Secreted</keyword>
<keyword id="KW-0732">Signal</keyword>
<keyword id="KW-0813">Transport</keyword>
<reference key="1">
    <citation type="journal article" date="1998" name="J. Mol. Evol.">
        <title>Phylogenetic analysis of three lipocalin-like proteins present in the milk of Trichosurus vulpecula (Phalangeridae, Marsupialia).</title>
        <authorList>
            <person name="Piotte C.P."/>
            <person name="Hunter A.K."/>
            <person name="Marshall C.J."/>
            <person name="Grigor M.R."/>
        </authorList>
    </citation>
    <scope>NUCLEOTIDE SEQUENCE [MRNA]</scope>
    <source>
        <tissue>Mammary gland</tissue>
    </source>
</reference>
<reference key="2">
    <citation type="journal article" date="2007" name="Biochem. J.">
        <title>Three-dimensional structure and ligand binding properties of trichosurin, a metatherian lipocalin from the milk whey of the common brushtail possum Trichosurus vulpecula.</title>
        <authorList>
            <person name="Watson R.P."/>
            <person name="Demmer J."/>
            <person name="Baker E.N."/>
            <person name="Arcus V.L."/>
        </authorList>
    </citation>
    <scope>X-RAY CRYSTALLOGRAPHY (1.5 ANGSTROMS) OF 16-180</scope>
    <scope>SUBUNIT</scope>
    <scope>DISULFIDE BOND</scope>
</reference>
<protein>
    <recommendedName>
        <fullName>Trichosurin</fullName>
    </recommendedName>
</protein>
<evidence type="ECO:0000255" key="1"/>
<evidence type="ECO:0000269" key="2">
    <source>
    </source>
</evidence>
<evidence type="ECO:0000305" key="3"/>
<evidence type="ECO:0007829" key="4">
    <source>
        <dbReference type="PDB" id="2R73"/>
    </source>
</evidence>
<evidence type="ECO:0007829" key="5">
    <source>
        <dbReference type="PDB" id="2RA6"/>
    </source>
</evidence>
<comment type="subunit">
    <text evidence="2">Homodimer.</text>
</comment>
<comment type="subcellular location">
    <subcellularLocation>
        <location>Secreted</location>
    </subcellularLocation>
</comment>
<comment type="tissue specificity">
    <text>Milk.</text>
</comment>
<comment type="similarity">
    <text evidence="3">Belongs to the calycin superfamily. Lipocalin family.</text>
</comment>
<sequence length="180" mass="21025">MKLLLLSMGLALVCGLQPECSRSEEDLSDEKERKWEQLSRHWHTVVLASSDRSLIEEEGPFRNFIQNITVESGNLNGFFLTRKNGQCIPLYLTAFKTEEARQFKLNYYGTNDVYYGSSKPNEYAKFIFYNYHDGKVNVVANLFGRTPNLSNEIKKRFEEDFMNRGFRRENILDISEVDHC</sequence>
<name>TRIC_TRIVU</name>